<keyword id="KW-0175">Coiled coil</keyword>
<keyword id="KW-0964">Secreted</keyword>
<keyword id="KW-0843">Virulence</keyword>
<evidence type="ECO:0000250" key="1"/>
<evidence type="ECO:0000255" key="2"/>
<evidence type="ECO:0000305" key="3"/>
<comment type="function">
    <text evidence="1">Required for invasion of epithelial cells, as well as for survival within host cells, escape from endocytic vesicles and subsequent actin-tail formation. Probably regulates the secretion of effectors BipB and BipC and their final integration into the target cell membrane (By similarity).</text>
</comment>
<comment type="subcellular location">
    <subcellularLocation>
        <location evidence="1">Secreted</location>
    </subcellularLocation>
    <text evidence="1">Secreted via the bsa type III secretion system. Localizes to the tip of the external secretion needle that is part of the secretion apparatus (By similarity).</text>
</comment>
<comment type="domain">
    <text evidence="1">The N-terminal domain is an intra-molecular chaperone that prevents premature oligomerization of the residues on the coiled-coil region that are involved in interactions with the needle and/or itself. The residues in the C-terminal domain probably form oligomeric structures at the tip of the needle that are responsible for the regulation of secretion of other effectors (By similarity).</text>
</comment>
<comment type="similarity">
    <text evidence="3">Belongs to the invasin protein D family.</text>
</comment>
<comment type="sequence caution" evidence="3">
    <conflict type="erroneous initiation">
        <sequence resource="EMBL-CDS" id="ABC34619"/>
    </conflict>
</comment>
<reference key="1">
    <citation type="journal article" date="2005" name="BMC Genomics">
        <title>Bacterial genome adaptation to niches: divergence of the potential virulence genes in three Burkholderia species of different survival strategies.</title>
        <authorList>
            <person name="Kim H.S."/>
            <person name="Schell M.A."/>
            <person name="Yu Y."/>
            <person name="Ulrich R.L."/>
            <person name="Sarria S.H."/>
            <person name="Nierman W.C."/>
            <person name="DeShazer D."/>
        </authorList>
    </citation>
    <scope>NUCLEOTIDE SEQUENCE [LARGE SCALE GENOMIC DNA]</scope>
    <source>
        <strain>ATCC 700388 / DSM 13276 / CCUG 48851 / CIP 106301 / E264</strain>
    </source>
</reference>
<proteinExistence type="inferred from homology"/>
<feature type="chain" id="PRO_0000344010" description="Translocator protein BipD">
    <location>
        <begin position="1"/>
        <end position="310"/>
    </location>
</feature>
<feature type="coiled-coil region" evidence="2">
    <location>
        <begin position="127"/>
        <end position="171"/>
    </location>
</feature>
<feature type="coiled-coil region" evidence="2">
    <location>
        <begin position="250"/>
        <end position="299"/>
    </location>
</feature>
<gene>
    <name type="primary">bipD</name>
    <name type="ordered locus">BTH_II0844</name>
</gene>
<protein>
    <recommendedName>
        <fullName>Translocator protein BipD</fullName>
    </recommendedName>
</protein>
<sequence length="310" mass="33727">MNVQVDMGRALAARDWRAVAALAVAMPAHAGAGTITDDDLRAAGVDRRVPEQKLGATIDEFASVRLPEQIDGEFVEGRRANLAVFDDARVAVRSHALAQRNLLERWETEHLGGTLDAAGSGGGIQPDPILQQLVDVIAQGKSDVDAYATIVEGLTKYFQSVADVMSKLQDYISAKDDKNMKIDGGKIKALIQQVIDNLPKMQLPKGADIARWRKELGDAVSISDSGVVTINPDKLIKMRDSLPPDGTVWDTARYQAWNTAFSGQKDNIQNDVQTLVEKYSHQNSNFDNLVKVLSGAISTLTDTAKSYLQI</sequence>
<dbReference type="EMBL" id="CP000085">
    <property type="protein sequence ID" value="ABC34619.1"/>
    <property type="status" value="ALT_INIT"/>
    <property type="molecule type" value="Genomic_DNA"/>
</dbReference>
<dbReference type="RefSeq" id="WP_025404166.1">
    <property type="nucleotide sequence ID" value="NC_007650.1"/>
</dbReference>
<dbReference type="SMR" id="Q2T708"/>
<dbReference type="GeneID" id="45118321"/>
<dbReference type="KEGG" id="bte:BTH_II0844"/>
<dbReference type="HOGENOM" id="CLU_893331_0_0_4"/>
<dbReference type="Proteomes" id="UP000001930">
    <property type="component" value="Chromosome II"/>
</dbReference>
<dbReference type="GO" id="GO:0005576">
    <property type="term" value="C:extracellular region"/>
    <property type="evidence" value="ECO:0007669"/>
    <property type="project" value="UniProtKB-SubCell"/>
</dbReference>
<dbReference type="Gene3D" id="1.20.1710.10">
    <property type="entry name" value="IpaD-like"/>
    <property type="match status" value="1"/>
</dbReference>
<dbReference type="InterPro" id="IPR036708">
    <property type="entry name" value="BipD-like_sf"/>
</dbReference>
<dbReference type="InterPro" id="IPR009483">
    <property type="entry name" value="IpaD/BipD/SipD"/>
</dbReference>
<dbReference type="NCBIfam" id="TIGR02553">
    <property type="entry name" value="SipD_IpaD_SspD"/>
    <property type="match status" value="1"/>
</dbReference>
<dbReference type="Pfam" id="PF06511">
    <property type="entry name" value="T3SS_TC"/>
    <property type="match status" value="1"/>
</dbReference>
<dbReference type="SUPFAM" id="SSF140693">
    <property type="entry name" value="IpaD-like"/>
    <property type="match status" value="1"/>
</dbReference>
<accession>Q2T708</accession>
<organism>
    <name type="scientific">Burkholderia thailandensis (strain ATCC 700388 / DSM 13276 / CCUG 48851 / CIP 106301 / E264)</name>
    <dbReference type="NCBI Taxonomy" id="271848"/>
    <lineage>
        <taxon>Bacteria</taxon>
        <taxon>Pseudomonadati</taxon>
        <taxon>Pseudomonadota</taxon>
        <taxon>Betaproteobacteria</taxon>
        <taxon>Burkholderiales</taxon>
        <taxon>Burkholderiaceae</taxon>
        <taxon>Burkholderia</taxon>
        <taxon>pseudomallei group</taxon>
    </lineage>
</organism>
<name>BIPD_BURTA</name>